<protein>
    <recommendedName>
        <fullName evidence="1">UPF0154 protein PEPE_0872</fullName>
    </recommendedName>
</protein>
<reference key="1">
    <citation type="journal article" date="2006" name="Proc. Natl. Acad. Sci. U.S.A.">
        <title>Comparative genomics of the lactic acid bacteria.</title>
        <authorList>
            <person name="Makarova K.S."/>
            <person name="Slesarev A."/>
            <person name="Wolf Y.I."/>
            <person name="Sorokin A."/>
            <person name="Mirkin B."/>
            <person name="Koonin E.V."/>
            <person name="Pavlov A."/>
            <person name="Pavlova N."/>
            <person name="Karamychev V."/>
            <person name="Polouchine N."/>
            <person name="Shakhova V."/>
            <person name="Grigoriev I."/>
            <person name="Lou Y."/>
            <person name="Rohksar D."/>
            <person name="Lucas S."/>
            <person name="Huang K."/>
            <person name="Goodstein D.M."/>
            <person name="Hawkins T."/>
            <person name="Plengvidhya V."/>
            <person name="Welker D."/>
            <person name="Hughes J."/>
            <person name="Goh Y."/>
            <person name="Benson A."/>
            <person name="Baldwin K."/>
            <person name="Lee J.-H."/>
            <person name="Diaz-Muniz I."/>
            <person name="Dosti B."/>
            <person name="Smeianov V."/>
            <person name="Wechter W."/>
            <person name="Barabote R."/>
            <person name="Lorca G."/>
            <person name="Altermann E."/>
            <person name="Barrangou R."/>
            <person name="Ganesan B."/>
            <person name="Xie Y."/>
            <person name="Rawsthorne H."/>
            <person name="Tamir D."/>
            <person name="Parker C."/>
            <person name="Breidt F."/>
            <person name="Broadbent J.R."/>
            <person name="Hutkins R."/>
            <person name="O'Sullivan D."/>
            <person name="Steele J."/>
            <person name="Unlu G."/>
            <person name="Saier M.H. Jr."/>
            <person name="Klaenhammer T."/>
            <person name="Richardson P."/>
            <person name="Kozyavkin S."/>
            <person name="Weimer B.C."/>
            <person name="Mills D.A."/>
        </authorList>
    </citation>
    <scope>NUCLEOTIDE SEQUENCE [LARGE SCALE GENOMIC DNA]</scope>
    <source>
        <strain>ATCC 25745 / CCUG 21536 / LMG 10740 / 183-1w</strain>
    </source>
</reference>
<gene>
    <name type="ordered locus">PEPE_0872</name>
</gene>
<accession>Q03FU1</accession>
<organism>
    <name type="scientific">Pediococcus pentosaceus (strain ATCC 25745 / CCUG 21536 / LMG 10740 / 183-1w)</name>
    <dbReference type="NCBI Taxonomy" id="278197"/>
    <lineage>
        <taxon>Bacteria</taxon>
        <taxon>Bacillati</taxon>
        <taxon>Bacillota</taxon>
        <taxon>Bacilli</taxon>
        <taxon>Lactobacillales</taxon>
        <taxon>Lactobacillaceae</taxon>
        <taxon>Pediococcus</taxon>
    </lineage>
</organism>
<proteinExistence type="inferred from homology"/>
<name>Y872_PEDPA</name>
<evidence type="ECO:0000255" key="1">
    <source>
        <dbReference type="HAMAP-Rule" id="MF_00363"/>
    </source>
</evidence>
<feature type="chain" id="PRO_1000005636" description="UPF0154 protein PEPE_0872">
    <location>
        <begin position="1"/>
        <end position="73"/>
    </location>
</feature>
<feature type="transmembrane region" description="Helical" evidence="1">
    <location>
        <begin position="5"/>
        <end position="25"/>
    </location>
</feature>
<comment type="subcellular location">
    <subcellularLocation>
        <location evidence="1">Cell membrane</location>
        <topology evidence="1">Single-pass membrane protein</topology>
    </subcellularLocation>
</comment>
<comment type="similarity">
    <text evidence="1">Belongs to the UPF0154 family.</text>
</comment>
<keyword id="KW-1003">Cell membrane</keyword>
<keyword id="KW-0472">Membrane</keyword>
<keyword id="KW-0812">Transmembrane</keyword>
<keyword id="KW-1133">Transmembrane helix</keyword>
<sequence length="73" mass="8452">MSTGIWIMIVIIALLVGAVGGFFFARRYMENYLKNNPPINEDMLRTMMLQMGQKPSQKKLHQMMTAMQNQSKK</sequence>
<dbReference type="EMBL" id="CP000422">
    <property type="protein sequence ID" value="ABJ67931.1"/>
    <property type="molecule type" value="Genomic_DNA"/>
</dbReference>
<dbReference type="RefSeq" id="WP_002833599.1">
    <property type="nucleotide sequence ID" value="NC_008525.1"/>
</dbReference>
<dbReference type="SMR" id="Q03FU1"/>
<dbReference type="STRING" id="278197.PEPE_0872"/>
<dbReference type="GeneID" id="33062396"/>
<dbReference type="KEGG" id="ppe:PEPE_0872"/>
<dbReference type="eggNOG" id="COG3763">
    <property type="taxonomic scope" value="Bacteria"/>
</dbReference>
<dbReference type="HOGENOM" id="CLU_180108_0_1_9"/>
<dbReference type="OrthoDB" id="1769076at2"/>
<dbReference type="Proteomes" id="UP000000773">
    <property type="component" value="Chromosome"/>
</dbReference>
<dbReference type="GO" id="GO:0005886">
    <property type="term" value="C:plasma membrane"/>
    <property type="evidence" value="ECO:0007669"/>
    <property type="project" value="UniProtKB-SubCell"/>
</dbReference>
<dbReference type="HAMAP" id="MF_00363">
    <property type="entry name" value="UPF0154"/>
    <property type="match status" value="1"/>
</dbReference>
<dbReference type="InterPro" id="IPR005359">
    <property type="entry name" value="UPF0154"/>
</dbReference>
<dbReference type="Pfam" id="PF03672">
    <property type="entry name" value="UPF0154"/>
    <property type="match status" value="1"/>
</dbReference>